<organism>
    <name type="scientific">Streptococcus thermophilus (strain CNRZ 1066)</name>
    <dbReference type="NCBI Taxonomy" id="299768"/>
    <lineage>
        <taxon>Bacteria</taxon>
        <taxon>Bacillati</taxon>
        <taxon>Bacillota</taxon>
        <taxon>Bacilli</taxon>
        <taxon>Lactobacillales</taxon>
        <taxon>Streptococcaceae</taxon>
        <taxon>Streptococcus</taxon>
    </lineage>
</organism>
<evidence type="ECO:0000255" key="1">
    <source>
        <dbReference type="HAMAP-Rule" id="MF_00003"/>
    </source>
</evidence>
<feature type="chain" id="PRO_0000102751" description="Ribosome-binding factor A">
    <location>
        <begin position="1"/>
        <end position="117"/>
    </location>
</feature>
<proteinExistence type="inferred from homology"/>
<sequence length="117" mass="13416">MGNSFRVDRVGMEIKREVNEILQKKVRDPRVQNVTITDVQMLGDLSAAKVFYTIHSTLASDNQKAQTGLEKATGTIKRELGKNLTMYKIPDLIFIKDESIEYGNKIDEMLRNLERKD</sequence>
<accession>Q5M1B8</accession>
<name>RBFA_STRT1</name>
<keyword id="KW-0963">Cytoplasm</keyword>
<keyword id="KW-0690">Ribosome biogenesis</keyword>
<dbReference type="EMBL" id="CP000024">
    <property type="protein sequence ID" value="AAV61948.1"/>
    <property type="molecule type" value="Genomic_DNA"/>
</dbReference>
<dbReference type="RefSeq" id="WP_002949692.1">
    <property type="nucleotide sequence ID" value="NC_006449.1"/>
</dbReference>
<dbReference type="SMR" id="Q5M1B8"/>
<dbReference type="GeneID" id="66898262"/>
<dbReference type="KEGG" id="stc:str0345"/>
<dbReference type="HOGENOM" id="CLU_089475_3_0_9"/>
<dbReference type="GO" id="GO:0005829">
    <property type="term" value="C:cytosol"/>
    <property type="evidence" value="ECO:0007669"/>
    <property type="project" value="TreeGrafter"/>
</dbReference>
<dbReference type="GO" id="GO:0043024">
    <property type="term" value="F:ribosomal small subunit binding"/>
    <property type="evidence" value="ECO:0007669"/>
    <property type="project" value="TreeGrafter"/>
</dbReference>
<dbReference type="GO" id="GO:0030490">
    <property type="term" value="P:maturation of SSU-rRNA"/>
    <property type="evidence" value="ECO:0007669"/>
    <property type="project" value="UniProtKB-UniRule"/>
</dbReference>
<dbReference type="Gene3D" id="3.30.300.20">
    <property type="match status" value="1"/>
</dbReference>
<dbReference type="HAMAP" id="MF_00003">
    <property type="entry name" value="RbfA"/>
    <property type="match status" value="1"/>
</dbReference>
<dbReference type="InterPro" id="IPR015946">
    <property type="entry name" value="KH_dom-like_a/b"/>
</dbReference>
<dbReference type="InterPro" id="IPR000238">
    <property type="entry name" value="RbfA"/>
</dbReference>
<dbReference type="InterPro" id="IPR023799">
    <property type="entry name" value="RbfA_dom_sf"/>
</dbReference>
<dbReference type="InterPro" id="IPR020053">
    <property type="entry name" value="Ribosome-bd_factorA_CS"/>
</dbReference>
<dbReference type="NCBIfam" id="TIGR00082">
    <property type="entry name" value="rbfA"/>
    <property type="match status" value="1"/>
</dbReference>
<dbReference type="PANTHER" id="PTHR33515">
    <property type="entry name" value="RIBOSOME-BINDING FACTOR A, CHLOROPLASTIC-RELATED"/>
    <property type="match status" value="1"/>
</dbReference>
<dbReference type="PANTHER" id="PTHR33515:SF1">
    <property type="entry name" value="RIBOSOME-BINDING FACTOR A, CHLOROPLASTIC-RELATED"/>
    <property type="match status" value="1"/>
</dbReference>
<dbReference type="Pfam" id="PF02033">
    <property type="entry name" value="RBFA"/>
    <property type="match status" value="1"/>
</dbReference>
<dbReference type="SUPFAM" id="SSF89919">
    <property type="entry name" value="Ribosome-binding factor A, RbfA"/>
    <property type="match status" value="1"/>
</dbReference>
<dbReference type="PROSITE" id="PS01319">
    <property type="entry name" value="RBFA"/>
    <property type="match status" value="1"/>
</dbReference>
<reference key="1">
    <citation type="journal article" date="2004" name="Nat. Biotechnol.">
        <title>Complete sequence and comparative genome analysis of the dairy bacterium Streptococcus thermophilus.</title>
        <authorList>
            <person name="Bolotin A."/>
            <person name="Quinquis B."/>
            <person name="Renault P."/>
            <person name="Sorokin A."/>
            <person name="Ehrlich S.D."/>
            <person name="Kulakauskas S."/>
            <person name="Lapidus A."/>
            <person name="Goltsman E."/>
            <person name="Mazur M."/>
            <person name="Pusch G.D."/>
            <person name="Fonstein M."/>
            <person name="Overbeek R."/>
            <person name="Kyprides N."/>
            <person name="Purnelle B."/>
            <person name="Prozzi D."/>
            <person name="Ngui K."/>
            <person name="Masuy D."/>
            <person name="Hancy F."/>
            <person name="Burteau S."/>
            <person name="Boutry M."/>
            <person name="Delcour J."/>
            <person name="Goffeau A."/>
            <person name="Hols P."/>
        </authorList>
    </citation>
    <scope>NUCLEOTIDE SEQUENCE [LARGE SCALE GENOMIC DNA]</scope>
    <source>
        <strain>CNRZ 1066</strain>
    </source>
</reference>
<comment type="function">
    <text evidence="1">One of several proteins that assist in the late maturation steps of the functional core of the 30S ribosomal subunit. Associates with free 30S ribosomal subunits (but not with 30S subunits that are part of 70S ribosomes or polysomes). Required for efficient processing of 16S rRNA. May interact with the 5'-terminal helix region of 16S rRNA.</text>
</comment>
<comment type="subunit">
    <text evidence="1">Monomer. Binds 30S ribosomal subunits, but not 50S ribosomal subunits or 70S ribosomes.</text>
</comment>
<comment type="subcellular location">
    <subcellularLocation>
        <location evidence="1">Cytoplasm</location>
    </subcellularLocation>
</comment>
<comment type="similarity">
    <text evidence="1">Belongs to the RbfA family.</text>
</comment>
<gene>
    <name evidence="1" type="primary">rbfA</name>
    <name type="ordered locus">str0345</name>
</gene>
<protein>
    <recommendedName>
        <fullName evidence="1">Ribosome-binding factor A</fullName>
    </recommendedName>
</protein>